<feature type="chain" id="PRO_1000115345" description="Chorismate synthase">
    <location>
        <begin position="1"/>
        <end position="363"/>
    </location>
</feature>
<feature type="region of interest" description="Disordered" evidence="2">
    <location>
        <begin position="36"/>
        <end position="58"/>
    </location>
</feature>
<feature type="binding site" evidence="1">
    <location>
        <position position="47"/>
    </location>
    <ligand>
        <name>NADP(+)</name>
        <dbReference type="ChEBI" id="CHEBI:58349"/>
    </ligand>
</feature>
<feature type="binding site" evidence="1">
    <location>
        <begin position="124"/>
        <end position="126"/>
    </location>
    <ligand>
        <name>FMN</name>
        <dbReference type="ChEBI" id="CHEBI:58210"/>
    </ligand>
</feature>
<feature type="binding site" evidence="1">
    <location>
        <position position="286"/>
    </location>
    <ligand>
        <name>FMN</name>
        <dbReference type="ChEBI" id="CHEBI:58210"/>
    </ligand>
</feature>
<feature type="binding site" evidence="1">
    <location>
        <begin position="301"/>
        <end position="305"/>
    </location>
    <ligand>
        <name>FMN</name>
        <dbReference type="ChEBI" id="CHEBI:58210"/>
    </ligand>
</feature>
<feature type="binding site" evidence="1">
    <location>
        <position position="327"/>
    </location>
    <ligand>
        <name>FMN</name>
        <dbReference type="ChEBI" id="CHEBI:58210"/>
    </ligand>
</feature>
<sequence length="363" mass="39385">MGNTFGHLFRITTFGESHGGGVGVIIDGCPPRLDLSESDIQGDLDRRRPGQSKITTPRKETDTCEIISGVFQGKTLGTPIAILVRNKDARSQDYNEMSVKFRPSHADATYEAKYGIRNWQGGGRSSARETIGRVAAGAIAKKILKQVANVEIVGYVKRIKDLEGNVNPDTVTLEEVESNIVRCPDADMAEKMIDLIDQTRRDKDSIGGVVECVARYVPRGLGEPVFDKLEADLAKAVMSLPASKGFEIGSGFAGTLLTGSEHNDEFYIDDNGNIRTKTNRSGGIQGGISNGEHIIIRVAFKPTATIGKEQKTVTSESEETTLAAKGRHDPCVLSRAVPMVEAMVALVLCDHLLRWQGQCQVLT</sequence>
<proteinExistence type="inferred from homology"/>
<dbReference type="EC" id="4.2.3.5" evidence="1"/>
<dbReference type="EMBL" id="CP000806">
    <property type="protein sequence ID" value="ACB53548.1"/>
    <property type="molecule type" value="Genomic_DNA"/>
</dbReference>
<dbReference type="RefSeq" id="WP_009543726.1">
    <property type="nucleotide sequence ID" value="NC_010546.1"/>
</dbReference>
<dbReference type="SMR" id="B1WRV7"/>
<dbReference type="STRING" id="43989.cce_4200"/>
<dbReference type="KEGG" id="cyt:cce_4200"/>
<dbReference type="eggNOG" id="COG0082">
    <property type="taxonomic scope" value="Bacteria"/>
</dbReference>
<dbReference type="HOGENOM" id="CLU_034547_0_1_3"/>
<dbReference type="OrthoDB" id="9771806at2"/>
<dbReference type="UniPathway" id="UPA00053">
    <property type="reaction ID" value="UER00090"/>
</dbReference>
<dbReference type="Proteomes" id="UP000001203">
    <property type="component" value="Chromosome circular"/>
</dbReference>
<dbReference type="GO" id="GO:0005829">
    <property type="term" value="C:cytosol"/>
    <property type="evidence" value="ECO:0007669"/>
    <property type="project" value="TreeGrafter"/>
</dbReference>
<dbReference type="GO" id="GO:0004107">
    <property type="term" value="F:chorismate synthase activity"/>
    <property type="evidence" value="ECO:0007669"/>
    <property type="project" value="UniProtKB-UniRule"/>
</dbReference>
<dbReference type="GO" id="GO:0010181">
    <property type="term" value="F:FMN binding"/>
    <property type="evidence" value="ECO:0007669"/>
    <property type="project" value="TreeGrafter"/>
</dbReference>
<dbReference type="GO" id="GO:0008652">
    <property type="term" value="P:amino acid biosynthetic process"/>
    <property type="evidence" value="ECO:0007669"/>
    <property type="project" value="UniProtKB-KW"/>
</dbReference>
<dbReference type="GO" id="GO:0009073">
    <property type="term" value="P:aromatic amino acid family biosynthetic process"/>
    <property type="evidence" value="ECO:0007669"/>
    <property type="project" value="UniProtKB-KW"/>
</dbReference>
<dbReference type="GO" id="GO:0009423">
    <property type="term" value="P:chorismate biosynthetic process"/>
    <property type="evidence" value="ECO:0007669"/>
    <property type="project" value="UniProtKB-UniRule"/>
</dbReference>
<dbReference type="CDD" id="cd07304">
    <property type="entry name" value="Chorismate_synthase"/>
    <property type="match status" value="1"/>
</dbReference>
<dbReference type="FunFam" id="3.60.150.10:FF:000003">
    <property type="entry name" value="Chorismate synthase"/>
    <property type="match status" value="1"/>
</dbReference>
<dbReference type="Gene3D" id="3.60.150.10">
    <property type="entry name" value="Chorismate synthase AroC"/>
    <property type="match status" value="1"/>
</dbReference>
<dbReference type="HAMAP" id="MF_00300">
    <property type="entry name" value="Chorismate_synth"/>
    <property type="match status" value="1"/>
</dbReference>
<dbReference type="InterPro" id="IPR000453">
    <property type="entry name" value="Chorismate_synth"/>
</dbReference>
<dbReference type="InterPro" id="IPR035904">
    <property type="entry name" value="Chorismate_synth_AroC_sf"/>
</dbReference>
<dbReference type="InterPro" id="IPR020541">
    <property type="entry name" value="Chorismate_synthase_CS"/>
</dbReference>
<dbReference type="NCBIfam" id="TIGR00033">
    <property type="entry name" value="aroC"/>
    <property type="match status" value="1"/>
</dbReference>
<dbReference type="NCBIfam" id="NF003793">
    <property type="entry name" value="PRK05382.1"/>
    <property type="match status" value="1"/>
</dbReference>
<dbReference type="PANTHER" id="PTHR21085">
    <property type="entry name" value="CHORISMATE SYNTHASE"/>
    <property type="match status" value="1"/>
</dbReference>
<dbReference type="PANTHER" id="PTHR21085:SF0">
    <property type="entry name" value="CHORISMATE SYNTHASE"/>
    <property type="match status" value="1"/>
</dbReference>
<dbReference type="Pfam" id="PF01264">
    <property type="entry name" value="Chorismate_synt"/>
    <property type="match status" value="1"/>
</dbReference>
<dbReference type="PIRSF" id="PIRSF001456">
    <property type="entry name" value="Chorismate_synth"/>
    <property type="match status" value="1"/>
</dbReference>
<dbReference type="SUPFAM" id="SSF103263">
    <property type="entry name" value="Chorismate synthase, AroC"/>
    <property type="match status" value="1"/>
</dbReference>
<dbReference type="PROSITE" id="PS00787">
    <property type="entry name" value="CHORISMATE_SYNTHASE_1"/>
    <property type="match status" value="1"/>
</dbReference>
<dbReference type="PROSITE" id="PS00788">
    <property type="entry name" value="CHORISMATE_SYNTHASE_2"/>
    <property type="match status" value="1"/>
</dbReference>
<dbReference type="PROSITE" id="PS00789">
    <property type="entry name" value="CHORISMATE_SYNTHASE_3"/>
    <property type="match status" value="1"/>
</dbReference>
<gene>
    <name evidence="1" type="primary">aroC</name>
    <name type="ordered locus">cce_4200</name>
</gene>
<name>AROC_CROS5</name>
<protein>
    <recommendedName>
        <fullName evidence="1">Chorismate synthase</fullName>
        <shortName evidence="1">CS</shortName>
        <ecNumber evidence="1">4.2.3.5</ecNumber>
    </recommendedName>
    <alternativeName>
        <fullName evidence="1">5-enolpyruvylshikimate-3-phosphate phospholyase</fullName>
    </alternativeName>
</protein>
<reference key="1">
    <citation type="journal article" date="2008" name="Proc. Natl. Acad. Sci. U.S.A.">
        <title>The genome of Cyanothece 51142, a unicellular diazotrophic cyanobacterium important in the marine nitrogen cycle.</title>
        <authorList>
            <person name="Welsh E.A."/>
            <person name="Liberton M."/>
            <person name="Stoeckel J."/>
            <person name="Loh T."/>
            <person name="Elvitigala T."/>
            <person name="Wang C."/>
            <person name="Wollam A."/>
            <person name="Fulton R.S."/>
            <person name="Clifton S.W."/>
            <person name="Jacobs J.M."/>
            <person name="Aurora R."/>
            <person name="Ghosh B.K."/>
            <person name="Sherman L.A."/>
            <person name="Smith R.D."/>
            <person name="Wilson R.K."/>
            <person name="Pakrasi H.B."/>
        </authorList>
    </citation>
    <scope>NUCLEOTIDE SEQUENCE [LARGE SCALE GENOMIC DNA]</scope>
    <source>
        <strain>ATCC 51142 / BH68</strain>
    </source>
</reference>
<evidence type="ECO:0000255" key="1">
    <source>
        <dbReference type="HAMAP-Rule" id="MF_00300"/>
    </source>
</evidence>
<evidence type="ECO:0000256" key="2">
    <source>
        <dbReference type="SAM" id="MobiDB-lite"/>
    </source>
</evidence>
<keyword id="KW-0028">Amino-acid biosynthesis</keyword>
<keyword id="KW-0057">Aromatic amino acid biosynthesis</keyword>
<keyword id="KW-0274">FAD</keyword>
<keyword id="KW-0285">Flavoprotein</keyword>
<keyword id="KW-0288">FMN</keyword>
<keyword id="KW-0456">Lyase</keyword>
<keyword id="KW-0521">NADP</keyword>
<keyword id="KW-1185">Reference proteome</keyword>
<comment type="function">
    <text evidence="1">Catalyzes the anti-1,4-elimination of the C-3 phosphate and the C-6 proR hydrogen from 5-enolpyruvylshikimate-3-phosphate (EPSP) to yield chorismate, which is the branch point compound that serves as the starting substrate for the three terminal pathways of aromatic amino acid biosynthesis. This reaction introduces a second double bond into the aromatic ring system.</text>
</comment>
<comment type="catalytic activity">
    <reaction evidence="1">
        <text>5-O-(1-carboxyvinyl)-3-phosphoshikimate = chorismate + phosphate</text>
        <dbReference type="Rhea" id="RHEA:21020"/>
        <dbReference type="ChEBI" id="CHEBI:29748"/>
        <dbReference type="ChEBI" id="CHEBI:43474"/>
        <dbReference type="ChEBI" id="CHEBI:57701"/>
        <dbReference type="EC" id="4.2.3.5"/>
    </reaction>
</comment>
<comment type="cofactor">
    <cofactor evidence="1">
        <name>FMNH2</name>
        <dbReference type="ChEBI" id="CHEBI:57618"/>
    </cofactor>
    <text evidence="1">Reduced FMN (FMNH(2)).</text>
</comment>
<comment type="pathway">
    <text evidence="1">Metabolic intermediate biosynthesis; chorismate biosynthesis; chorismate from D-erythrose 4-phosphate and phosphoenolpyruvate: step 7/7.</text>
</comment>
<comment type="subunit">
    <text evidence="1">Homotetramer.</text>
</comment>
<comment type="similarity">
    <text evidence="1">Belongs to the chorismate synthase family.</text>
</comment>
<organism>
    <name type="scientific">Crocosphaera subtropica (strain ATCC 51142 / BH68)</name>
    <name type="common">Cyanothece sp. (strain ATCC 51142)</name>
    <dbReference type="NCBI Taxonomy" id="43989"/>
    <lineage>
        <taxon>Bacteria</taxon>
        <taxon>Bacillati</taxon>
        <taxon>Cyanobacteriota</taxon>
        <taxon>Cyanophyceae</taxon>
        <taxon>Oscillatoriophycideae</taxon>
        <taxon>Chroococcales</taxon>
        <taxon>Aphanothecaceae</taxon>
        <taxon>Crocosphaera</taxon>
        <taxon>Crocosphaera subtropica</taxon>
    </lineage>
</organism>
<accession>B1WRV7</accession>